<organism>
    <name type="scientific">Escherichia coli (strain K12 / DH10B)</name>
    <dbReference type="NCBI Taxonomy" id="316385"/>
    <lineage>
        <taxon>Bacteria</taxon>
        <taxon>Pseudomonadati</taxon>
        <taxon>Pseudomonadota</taxon>
        <taxon>Gammaproteobacteria</taxon>
        <taxon>Enterobacterales</taxon>
        <taxon>Enterobacteriaceae</taxon>
        <taxon>Escherichia</taxon>
    </lineage>
</organism>
<dbReference type="EC" id="3.2.-.-" evidence="1"/>
<dbReference type="EMBL" id="CP000948">
    <property type="protein sequence ID" value="ACB01235.1"/>
    <property type="molecule type" value="Genomic_DNA"/>
</dbReference>
<dbReference type="RefSeq" id="WP_001239142.1">
    <property type="nucleotide sequence ID" value="NC_010473.1"/>
</dbReference>
<dbReference type="SMR" id="B1XBF5"/>
<dbReference type="GeneID" id="75169929"/>
<dbReference type="KEGG" id="ecd:ECDH10B_0031"/>
<dbReference type="HOGENOM" id="CLU_036838_2_2_6"/>
<dbReference type="GO" id="GO:0005829">
    <property type="term" value="C:cytosol"/>
    <property type="evidence" value="ECO:0007669"/>
    <property type="project" value="TreeGrafter"/>
</dbReference>
<dbReference type="GO" id="GO:0008477">
    <property type="term" value="F:purine nucleosidase activity"/>
    <property type="evidence" value="ECO:0007669"/>
    <property type="project" value="TreeGrafter"/>
</dbReference>
<dbReference type="GO" id="GO:0045437">
    <property type="term" value="F:uridine nucleosidase activity"/>
    <property type="evidence" value="ECO:0007669"/>
    <property type="project" value="UniProtKB-ARBA"/>
</dbReference>
<dbReference type="GO" id="GO:0006144">
    <property type="term" value="P:purine nucleobase metabolic process"/>
    <property type="evidence" value="ECO:0007669"/>
    <property type="project" value="UniProtKB-UniRule"/>
</dbReference>
<dbReference type="GO" id="GO:0006152">
    <property type="term" value="P:purine nucleoside catabolic process"/>
    <property type="evidence" value="ECO:0007669"/>
    <property type="project" value="TreeGrafter"/>
</dbReference>
<dbReference type="GO" id="GO:0006206">
    <property type="term" value="P:pyrimidine nucleobase metabolic process"/>
    <property type="evidence" value="ECO:0007669"/>
    <property type="project" value="UniProtKB-UniRule"/>
</dbReference>
<dbReference type="CDD" id="cd02651">
    <property type="entry name" value="nuc_hydro_IU_UC_XIUA"/>
    <property type="match status" value="1"/>
</dbReference>
<dbReference type="FunFam" id="3.90.245.10:FF:000002">
    <property type="entry name" value="Non-specific ribonucleoside hydrolase RihC"/>
    <property type="match status" value="1"/>
</dbReference>
<dbReference type="Gene3D" id="3.90.245.10">
    <property type="entry name" value="Ribonucleoside hydrolase-like"/>
    <property type="match status" value="1"/>
</dbReference>
<dbReference type="HAMAP" id="MF_01432">
    <property type="entry name" value="Nucleosid_hydro_RihC"/>
    <property type="match status" value="1"/>
</dbReference>
<dbReference type="InterPro" id="IPR015910">
    <property type="entry name" value="I/U_nuclsd_hydro_CS"/>
</dbReference>
<dbReference type="InterPro" id="IPR001910">
    <property type="entry name" value="Inosine/uridine_hydrolase_dom"/>
</dbReference>
<dbReference type="InterPro" id="IPR023186">
    <property type="entry name" value="IUNH"/>
</dbReference>
<dbReference type="InterPro" id="IPR022976">
    <property type="entry name" value="Nucleosid_hydro_RihC_nonspecif"/>
</dbReference>
<dbReference type="InterPro" id="IPR036452">
    <property type="entry name" value="Ribo_hydro-like"/>
</dbReference>
<dbReference type="NCBIfam" id="NF008036">
    <property type="entry name" value="PRK10768.1"/>
    <property type="match status" value="1"/>
</dbReference>
<dbReference type="PANTHER" id="PTHR12304">
    <property type="entry name" value="INOSINE-URIDINE PREFERRING NUCLEOSIDE HYDROLASE"/>
    <property type="match status" value="1"/>
</dbReference>
<dbReference type="PANTHER" id="PTHR12304:SF15">
    <property type="entry name" value="NON-SPECIFIC RIBONUCLEOSIDE HYDROLASE RIHC"/>
    <property type="match status" value="1"/>
</dbReference>
<dbReference type="Pfam" id="PF01156">
    <property type="entry name" value="IU_nuc_hydro"/>
    <property type="match status" value="1"/>
</dbReference>
<dbReference type="SUPFAM" id="SSF53590">
    <property type="entry name" value="Nucleoside hydrolase"/>
    <property type="match status" value="1"/>
</dbReference>
<dbReference type="PROSITE" id="PS01247">
    <property type="entry name" value="IUNH"/>
    <property type="match status" value="1"/>
</dbReference>
<name>RIHC_ECODH</name>
<accession>B1XBF5</accession>
<proteinExistence type="inferred from homology"/>
<reference key="1">
    <citation type="journal article" date="2008" name="J. Bacteriol.">
        <title>The complete genome sequence of Escherichia coli DH10B: insights into the biology of a laboratory workhorse.</title>
        <authorList>
            <person name="Durfee T."/>
            <person name="Nelson R."/>
            <person name="Baldwin S."/>
            <person name="Plunkett G. III"/>
            <person name="Burland V."/>
            <person name="Mau B."/>
            <person name="Petrosino J.F."/>
            <person name="Qin X."/>
            <person name="Muzny D.M."/>
            <person name="Ayele M."/>
            <person name="Gibbs R.A."/>
            <person name="Csorgo B."/>
            <person name="Posfai G."/>
            <person name="Weinstock G.M."/>
            <person name="Blattner F.R."/>
        </authorList>
    </citation>
    <scope>NUCLEOTIDE SEQUENCE [LARGE SCALE GENOMIC DNA]</scope>
    <source>
        <strain>K12 / DH10B</strain>
    </source>
</reference>
<keyword id="KW-0326">Glycosidase</keyword>
<keyword id="KW-0378">Hydrolase</keyword>
<protein>
    <recommendedName>
        <fullName evidence="1">Non-specific ribonucleoside hydrolase RihC</fullName>
        <ecNumber evidence="1">3.2.-.-</ecNumber>
    </recommendedName>
    <alternativeName>
        <fullName evidence="1">Purine/pyrimidine ribonucleoside hydrolase</fullName>
    </alternativeName>
</protein>
<comment type="function">
    <text evidence="1">Hydrolyzes both purine and pyrimidine ribonucleosides with a broad-substrate specificity.</text>
</comment>
<comment type="similarity">
    <text evidence="1">Belongs to the IUNH family. RihC subfamily.</text>
</comment>
<gene>
    <name evidence="1" type="primary">rihC</name>
    <name type="ordered locus">ECDH10B_0031</name>
</gene>
<feature type="chain" id="PRO_1000145812" description="Non-specific ribonucleoside hydrolase RihC">
    <location>
        <begin position="1"/>
        <end position="304"/>
    </location>
</feature>
<feature type="active site" evidence="1">
    <location>
        <position position="233"/>
    </location>
</feature>
<evidence type="ECO:0000255" key="1">
    <source>
        <dbReference type="HAMAP-Rule" id="MF_01432"/>
    </source>
</evidence>
<sequence>MRLPIFLDTDPGIDDAVAIAAAIFAPELDLQLMTTVAGNVSVEKTTRNALQLLHFWNAEIPLAQGAAVPLVRAPRDAASVHGESGMAGYDFVEHNRKPLGIPAFLAIRDALMRAPEPVTLVAIGPLTNIALLLSQCPECKPYIRRLVIMGGSAGRGNCTPNAEFNIAADPEAAACVFRSGIEIVMCGLDVTNQAILTPDYLSTLPQLNRTGKMLHALFSHYRSGSMQSGLRMHDLCAIAWLVRPDLFTLKPCFVAVETQGEFTSGTTVVDIDGCLGKPANVQVALDLDVKGFQQWVAEVLALAS</sequence>